<gene>
    <name evidence="1" type="primary">accD</name>
    <name type="ordered locus">CLM_4087</name>
</gene>
<proteinExistence type="inferred from homology"/>
<organism>
    <name type="scientific">Clostridium botulinum (strain Kyoto / Type A2)</name>
    <dbReference type="NCBI Taxonomy" id="536232"/>
    <lineage>
        <taxon>Bacteria</taxon>
        <taxon>Bacillati</taxon>
        <taxon>Bacillota</taxon>
        <taxon>Clostridia</taxon>
        <taxon>Eubacteriales</taxon>
        <taxon>Clostridiaceae</taxon>
        <taxon>Clostridium</taxon>
    </lineage>
</organism>
<comment type="function">
    <text evidence="1">Component of the acetyl coenzyme A carboxylase (ACC) complex. Biotin carboxylase (BC) catalyzes the carboxylation of biotin on its carrier protein (BCCP) and then the CO(2) group is transferred by the transcarboxylase to acetyl-CoA to form malonyl-CoA.</text>
</comment>
<comment type="catalytic activity">
    <reaction evidence="1">
        <text>N(6)-carboxybiotinyl-L-lysyl-[protein] + acetyl-CoA = N(6)-biotinyl-L-lysyl-[protein] + malonyl-CoA</text>
        <dbReference type="Rhea" id="RHEA:54728"/>
        <dbReference type="Rhea" id="RHEA-COMP:10505"/>
        <dbReference type="Rhea" id="RHEA-COMP:10506"/>
        <dbReference type="ChEBI" id="CHEBI:57288"/>
        <dbReference type="ChEBI" id="CHEBI:57384"/>
        <dbReference type="ChEBI" id="CHEBI:83144"/>
        <dbReference type="ChEBI" id="CHEBI:83145"/>
        <dbReference type="EC" id="2.1.3.15"/>
    </reaction>
</comment>
<comment type="cofactor">
    <cofactor evidence="1">
        <name>Zn(2+)</name>
        <dbReference type="ChEBI" id="CHEBI:29105"/>
    </cofactor>
    <text evidence="1">Binds 1 zinc ion per subunit.</text>
</comment>
<comment type="pathway">
    <text evidence="1">Lipid metabolism; malonyl-CoA biosynthesis; malonyl-CoA from acetyl-CoA: step 1/1.</text>
</comment>
<comment type="subunit">
    <text evidence="1">Acetyl-CoA carboxylase is a heterohexamer composed of biotin carboxyl carrier protein (AccB), biotin carboxylase (AccC) and two subunits each of ACCase subunit alpha (AccA) and ACCase subunit beta (AccD).</text>
</comment>
<comment type="subcellular location">
    <subcellularLocation>
        <location evidence="1">Cytoplasm</location>
    </subcellularLocation>
</comment>
<comment type="similarity">
    <text evidence="1">Belongs to the AccD/PCCB family.</text>
</comment>
<dbReference type="EC" id="2.1.3.15" evidence="1"/>
<dbReference type="EMBL" id="CP001581">
    <property type="protein sequence ID" value="ACO86209.1"/>
    <property type="molecule type" value="Genomic_DNA"/>
</dbReference>
<dbReference type="RefSeq" id="WP_003359363.1">
    <property type="nucleotide sequence ID" value="NC_012563.1"/>
</dbReference>
<dbReference type="SMR" id="C1FNJ8"/>
<dbReference type="KEGG" id="cby:CLM_4087"/>
<dbReference type="eggNOG" id="COG0777">
    <property type="taxonomic scope" value="Bacteria"/>
</dbReference>
<dbReference type="HOGENOM" id="CLU_015486_1_1_9"/>
<dbReference type="UniPathway" id="UPA00655">
    <property type="reaction ID" value="UER00711"/>
</dbReference>
<dbReference type="Proteomes" id="UP000001374">
    <property type="component" value="Chromosome"/>
</dbReference>
<dbReference type="GO" id="GO:0009317">
    <property type="term" value="C:acetyl-CoA carboxylase complex"/>
    <property type="evidence" value="ECO:0007669"/>
    <property type="project" value="InterPro"/>
</dbReference>
<dbReference type="GO" id="GO:0003989">
    <property type="term" value="F:acetyl-CoA carboxylase activity"/>
    <property type="evidence" value="ECO:0007669"/>
    <property type="project" value="InterPro"/>
</dbReference>
<dbReference type="GO" id="GO:0005524">
    <property type="term" value="F:ATP binding"/>
    <property type="evidence" value="ECO:0007669"/>
    <property type="project" value="UniProtKB-KW"/>
</dbReference>
<dbReference type="GO" id="GO:0016743">
    <property type="term" value="F:carboxyl- or carbamoyltransferase activity"/>
    <property type="evidence" value="ECO:0007669"/>
    <property type="project" value="UniProtKB-UniRule"/>
</dbReference>
<dbReference type="GO" id="GO:0008270">
    <property type="term" value="F:zinc ion binding"/>
    <property type="evidence" value="ECO:0007669"/>
    <property type="project" value="UniProtKB-UniRule"/>
</dbReference>
<dbReference type="GO" id="GO:0006633">
    <property type="term" value="P:fatty acid biosynthetic process"/>
    <property type="evidence" value="ECO:0007669"/>
    <property type="project" value="UniProtKB-KW"/>
</dbReference>
<dbReference type="GO" id="GO:2001295">
    <property type="term" value="P:malonyl-CoA biosynthetic process"/>
    <property type="evidence" value="ECO:0007669"/>
    <property type="project" value="UniProtKB-UniRule"/>
</dbReference>
<dbReference type="Gene3D" id="3.90.226.10">
    <property type="entry name" value="2-enoyl-CoA Hydratase, Chain A, domain 1"/>
    <property type="match status" value="1"/>
</dbReference>
<dbReference type="HAMAP" id="MF_01395">
    <property type="entry name" value="AcetylCoA_CT_beta"/>
    <property type="match status" value="1"/>
</dbReference>
<dbReference type="InterPro" id="IPR034733">
    <property type="entry name" value="AcCoA_carboxyl_beta"/>
</dbReference>
<dbReference type="InterPro" id="IPR000438">
    <property type="entry name" value="Acetyl_CoA_COase_Trfase_b_su"/>
</dbReference>
<dbReference type="InterPro" id="IPR029045">
    <property type="entry name" value="ClpP/crotonase-like_dom_sf"/>
</dbReference>
<dbReference type="InterPro" id="IPR011762">
    <property type="entry name" value="COA_CT_N"/>
</dbReference>
<dbReference type="InterPro" id="IPR041010">
    <property type="entry name" value="Znf-ACC"/>
</dbReference>
<dbReference type="NCBIfam" id="TIGR00515">
    <property type="entry name" value="accD"/>
    <property type="match status" value="1"/>
</dbReference>
<dbReference type="PANTHER" id="PTHR42995">
    <property type="entry name" value="ACETYL-COENZYME A CARBOXYLASE CARBOXYL TRANSFERASE SUBUNIT BETA, CHLOROPLASTIC"/>
    <property type="match status" value="1"/>
</dbReference>
<dbReference type="PANTHER" id="PTHR42995:SF5">
    <property type="entry name" value="ACETYL-COENZYME A CARBOXYLASE CARBOXYL TRANSFERASE SUBUNIT BETA, CHLOROPLASTIC"/>
    <property type="match status" value="1"/>
</dbReference>
<dbReference type="Pfam" id="PF01039">
    <property type="entry name" value="Carboxyl_trans"/>
    <property type="match status" value="1"/>
</dbReference>
<dbReference type="Pfam" id="PF17848">
    <property type="entry name" value="Zn_ribbon_ACC"/>
    <property type="match status" value="1"/>
</dbReference>
<dbReference type="PRINTS" id="PR01070">
    <property type="entry name" value="ACCCTRFRASEB"/>
</dbReference>
<dbReference type="SUPFAM" id="SSF52096">
    <property type="entry name" value="ClpP/crotonase"/>
    <property type="match status" value="1"/>
</dbReference>
<dbReference type="PROSITE" id="PS50980">
    <property type="entry name" value="COA_CT_NTER"/>
    <property type="match status" value="1"/>
</dbReference>
<name>ACCD_CLOBJ</name>
<evidence type="ECO:0000255" key="1">
    <source>
        <dbReference type="HAMAP-Rule" id="MF_01395"/>
    </source>
</evidence>
<evidence type="ECO:0000255" key="2">
    <source>
        <dbReference type="PROSITE-ProRule" id="PRU01136"/>
    </source>
</evidence>
<keyword id="KW-0067">ATP-binding</keyword>
<keyword id="KW-0963">Cytoplasm</keyword>
<keyword id="KW-0275">Fatty acid biosynthesis</keyword>
<keyword id="KW-0276">Fatty acid metabolism</keyword>
<keyword id="KW-0444">Lipid biosynthesis</keyword>
<keyword id="KW-0443">Lipid metabolism</keyword>
<keyword id="KW-0479">Metal-binding</keyword>
<keyword id="KW-0547">Nucleotide-binding</keyword>
<keyword id="KW-0808">Transferase</keyword>
<keyword id="KW-0862">Zinc</keyword>
<keyword id="KW-0863">Zinc-finger</keyword>
<reference key="1">
    <citation type="submission" date="2008-10" db="EMBL/GenBank/DDBJ databases">
        <title>Genome sequence of Clostridium botulinum A2 Kyoto.</title>
        <authorList>
            <person name="Shrivastava S."/>
            <person name="Brinkac L.M."/>
            <person name="Brown J.L."/>
            <person name="Bruce D."/>
            <person name="Detter C.C."/>
            <person name="Johnson E.A."/>
            <person name="Munk C.A."/>
            <person name="Smith L.A."/>
            <person name="Smith T.J."/>
            <person name="Sutton G."/>
            <person name="Brettin T.S."/>
        </authorList>
    </citation>
    <scope>NUCLEOTIDE SEQUENCE [LARGE SCALE GENOMIC DNA]</scope>
    <source>
        <strain>Kyoto / Type A2</strain>
    </source>
</reference>
<accession>C1FNJ8</accession>
<sequence length="289" mass="32653">MLKNLFRKTKYITVSQKNIGNYKRENTPTIPDGMWVKCNKCGEILYQNDLEKNYMVCNLCGNHFRIGVKERIKYLFDKDTFKEWDYKIKTENPLDFKGYDEKIEHIKEKTNLSEAVTTGKGKIAGMEVVVCIMDSKFMMGSMGSVVGEKITRAIERAIELRLPVIIFTASGGARMQEGILSLMQMAKVSSALAKLDEEGLLYICVLTDPTTGGVTASFAMLGDIILAEPDALIGFAGKRVIEQTINEKLPEDFQKSEFLLEHGFIDKIVPRSDLRKVLAKLINMHQNSF</sequence>
<feature type="chain" id="PRO_0000389724" description="Acetyl-coenzyme A carboxylase carboxyl transferase subunit beta">
    <location>
        <begin position="1"/>
        <end position="289"/>
    </location>
</feature>
<feature type="domain" description="CoA carboxyltransferase N-terminal" evidence="2">
    <location>
        <begin position="34"/>
        <end position="289"/>
    </location>
</feature>
<feature type="zinc finger region" description="C4-type" evidence="1">
    <location>
        <begin position="38"/>
        <end position="60"/>
    </location>
</feature>
<feature type="binding site" evidence="1">
    <location>
        <position position="38"/>
    </location>
    <ligand>
        <name>Zn(2+)</name>
        <dbReference type="ChEBI" id="CHEBI:29105"/>
    </ligand>
</feature>
<feature type="binding site" evidence="1">
    <location>
        <position position="41"/>
    </location>
    <ligand>
        <name>Zn(2+)</name>
        <dbReference type="ChEBI" id="CHEBI:29105"/>
    </ligand>
</feature>
<feature type="binding site" evidence="1">
    <location>
        <position position="57"/>
    </location>
    <ligand>
        <name>Zn(2+)</name>
        <dbReference type="ChEBI" id="CHEBI:29105"/>
    </ligand>
</feature>
<feature type="binding site" evidence="1">
    <location>
        <position position="60"/>
    </location>
    <ligand>
        <name>Zn(2+)</name>
        <dbReference type="ChEBI" id="CHEBI:29105"/>
    </ligand>
</feature>
<protein>
    <recommendedName>
        <fullName evidence="1">Acetyl-coenzyme A carboxylase carboxyl transferase subunit beta</fullName>
        <shortName evidence="1">ACCase subunit beta</shortName>
        <shortName evidence="1">Acetyl-CoA carboxylase carboxyltransferase subunit beta</shortName>
        <ecNumber evidence="1">2.1.3.15</ecNumber>
    </recommendedName>
</protein>